<sequence length="240" mass="26264">MAQVSMRDMINAGVHFGHQTRYWNPQMKPFIFGARNGVHIINLEKTLPLFNEALAELTRIASNNGKVLFVGTKRAASEAVQAAALDCQQYYVNHRWLGGMLTNWKTVRQSIKRLKDLETQSQDGTFDKLTKKEALMRSREMEKLELSLGGIKDMGGLPDALFVIGADHEHIAVKEANNLGIPVFAIVDTNSTPAGVDFVIPGNDDATRAIQLYVSAAAAAVKEGRGNEAQVAEELAADAE</sequence>
<reference key="1">
    <citation type="journal article" date="2005" name="J. Bacteriol.">
        <title>Genomic sequence of an otitis media isolate of nontypeable Haemophilus influenzae: comparative study with H. influenzae serotype d, strain KW20.</title>
        <authorList>
            <person name="Harrison A."/>
            <person name="Dyer D.W."/>
            <person name="Gillaspy A."/>
            <person name="Ray W.C."/>
            <person name="Mungur R."/>
            <person name="Carson M.B."/>
            <person name="Zhong H."/>
            <person name="Gipson J."/>
            <person name="Gipson M."/>
            <person name="Johnson L.S."/>
            <person name="Lewis L."/>
            <person name="Bakaletz L.O."/>
            <person name="Munson R.S. Jr."/>
        </authorList>
    </citation>
    <scope>NUCLEOTIDE SEQUENCE [LARGE SCALE GENOMIC DNA]</scope>
    <source>
        <strain>86-028NP</strain>
    </source>
</reference>
<comment type="similarity">
    <text evidence="1">Belongs to the universal ribosomal protein uS2 family.</text>
</comment>
<comment type="sequence caution" evidence="2">
    <conflict type="erroneous initiation">
        <sequence resource="EMBL-CDS" id="AAX87951"/>
    </conflict>
</comment>
<feature type="chain" id="PRO_0000351995" description="Small ribosomal subunit protein uS2">
    <location>
        <begin position="1"/>
        <end position="240"/>
    </location>
</feature>
<name>RS2_HAEI8</name>
<organism>
    <name type="scientific">Haemophilus influenzae (strain 86-028NP)</name>
    <dbReference type="NCBI Taxonomy" id="281310"/>
    <lineage>
        <taxon>Bacteria</taxon>
        <taxon>Pseudomonadati</taxon>
        <taxon>Pseudomonadota</taxon>
        <taxon>Gammaproteobacteria</taxon>
        <taxon>Pasteurellales</taxon>
        <taxon>Pasteurellaceae</taxon>
        <taxon>Haemophilus</taxon>
    </lineage>
</organism>
<keyword id="KW-0687">Ribonucleoprotein</keyword>
<keyword id="KW-0689">Ribosomal protein</keyword>
<gene>
    <name evidence="1" type="primary">rpsB</name>
    <name type="ordered locus">NTHI1080</name>
</gene>
<proteinExistence type="inferred from homology"/>
<accession>Q4QLZ6</accession>
<protein>
    <recommendedName>
        <fullName evidence="1">Small ribosomal subunit protein uS2</fullName>
    </recommendedName>
    <alternativeName>
        <fullName evidence="2">30S ribosomal protein S2</fullName>
    </alternativeName>
</protein>
<dbReference type="EMBL" id="CP000057">
    <property type="protein sequence ID" value="AAX87951.1"/>
    <property type="status" value="ALT_INIT"/>
    <property type="molecule type" value="Genomic_DNA"/>
</dbReference>
<dbReference type="RefSeq" id="WP_005645552.1">
    <property type="nucleotide sequence ID" value="NC_007146.2"/>
</dbReference>
<dbReference type="SMR" id="Q4QLZ6"/>
<dbReference type="GeneID" id="93219949"/>
<dbReference type="KEGG" id="hit:NTHI1080"/>
<dbReference type="HOGENOM" id="CLU_040318_1_0_6"/>
<dbReference type="Proteomes" id="UP000002525">
    <property type="component" value="Chromosome"/>
</dbReference>
<dbReference type="GO" id="GO:0022627">
    <property type="term" value="C:cytosolic small ribosomal subunit"/>
    <property type="evidence" value="ECO:0007669"/>
    <property type="project" value="TreeGrafter"/>
</dbReference>
<dbReference type="GO" id="GO:0003735">
    <property type="term" value="F:structural constituent of ribosome"/>
    <property type="evidence" value="ECO:0007669"/>
    <property type="project" value="InterPro"/>
</dbReference>
<dbReference type="GO" id="GO:0006412">
    <property type="term" value="P:translation"/>
    <property type="evidence" value="ECO:0007669"/>
    <property type="project" value="UniProtKB-UniRule"/>
</dbReference>
<dbReference type="CDD" id="cd01425">
    <property type="entry name" value="RPS2"/>
    <property type="match status" value="1"/>
</dbReference>
<dbReference type="FunFam" id="1.10.287.610:FF:000001">
    <property type="entry name" value="30S ribosomal protein S2"/>
    <property type="match status" value="1"/>
</dbReference>
<dbReference type="Gene3D" id="3.40.50.10490">
    <property type="entry name" value="Glucose-6-phosphate isomerase like protein, domain 1"/>
    <property type="match status" value="1"/>
</dbReference>
<dbReference type="Gene3D" id="1.10.287.610">
    <property type="entry name" value="Helix hairpin bin"/>
    <property type="match status" value="1"/>
</dbReference>
<dbReference type="HAMAP" id="MF_00291_B">
    <property type="entry name" value="Ribosomal_uS2_B"/>
    <property type="match status" value="1"/>
</dbReference>
<dbReference type="InterPro" id="IPR001865">
    <property type="entry name" value="Ribosomal_uS2"/>
</dbReference>
<dbReference type="InterPro" id="IPR005706">
    <property type="entry name" value="Ribosomal_uS2_bac/mit/plastid"/>
</dbReference>
<dbReference type="InterPro" id="IPR018130">
    <property type="entry name" value="Ribosomal_uS2_CS"/>
</dbReference>
<dbReference type="InterPro" id="IPR023591">
    <property type="entry name" value="Ribosomal_uS2_flav_dom_sf"/>
</dbReference>
<dbReference type="NCBIfam" id="TIGR01011">
    <property type="entry name" value="rpsB_bact"/>
    <property type="match status" value="1"/>
</dbReference>
<dbReference type="PANTHER" id="PTHR12534">
    <property type="entry name" value="30S RIBOSOMAL PROTEIN S2 PROKARYOTIC AND ORGANELLAR"/>
    <property type="match status" value="1"/>
</dbReference>
<dbReference type="PANTHER" id="PTHR12534:SF0">
    <property type="entry name" value="SMALL RIBOSOMAL SUBUNIT PROTEIN US2M"/>
    <property type="match status" value="1"/>
</dbReference>
<dbReference type="Pfam" id="PF00318">
    <property type="entry name" value="Ribosomal_S2"/>
    <property type="match status" value="1"/>
</dbReference>
<dbReference type="PRINTS" id="PR00395">
    <property type="entry name" value="RIBOSOMALS2"/>
</dbReference>
<dbReference type="SUPFAM" id="SSF52313">
    <property type="entry name" value="Ribosomal protein S2"/>
    <property type="match status" value="1"/>
</dbReference>
<dbReference type="PROSITE" id="PS00962">
    <property type="entry name" value="RIBOSOMAL_S2_1"/>
    <property type="match status" value="1"/>
</dbReference>
<dbReference type="PROSITE" id="PS00963">
    <property type="entry name" value="RIBOSOMAL_S2_2"/>
    <property type="match status" value="1"/>
</dbReference>
<evidence type="ECO:0000255" key="1">
    <source>
        <dbReference type="HAMAP-Rule" id="MF_00291"/>
    </source>
</evidence>
<evidence type="ECO:0000305" key="2"/>